<protein>
    <recommendedName>
        <fullName evidence="1">Protein ApaG</fullName>
    </recommendedName>
</protein>
<dbReference type="EMBL" id="AE008923">
    <property type="protein sequence ID" value="AAM35750.1"/>
    <property type="molecule type" value="Genomic_DNA"/>
</dbReference>
<dbReference type="RefSeq" id="WP_003487449.1">
    <property type="nucleotide sequence ID" value="NC_003919.1"/>
</dbReference>
<dbReference type="PDB" id="2F1E">
    <property type="method" value="NMR"/>
    <property type="chains" value="A=1-127"/>
</dbReference>
<dbReference type="PDBsum" id="2F1E"/>
<dbReference type="BMRB" id="Q8PP26"/>
<dbReference type="SMR" id="Q8PP26"/>
<dbReference type="GeneID" id="66910051"/>
<dbReference type="KEGG" id="xac:XAC0862"/>
<dbReference type="eggNOG" id="COG2967">
    <property type="taxonomic scope" value="Bacteria"/>
</dbReference>
<dbReference type="HOGENOM" id="CLU_128074_1_0_6"/>
<dbReference type="EvolutionaryTrace" id="Q8PP26"/>
<dbReference type="Proteomes" id="UP000000576">
    <property type="component" value="Chromosome"/>
</dbReference>
<dbReference type="GO" id="GO:0070987">
    <property type="term" value="P:error-free translesion synthesis"/>
    <property type="evidence" value="ECO:0007669"/>
    <property type="project" value="TreeGrafter"/>
</dbReference>
<dbReference type="Gene3D" id="2.60.40.1470">
    <property type="entry name" value="ApaG domain"/>
    <property type="match status" value="1"/>
</dbReference>
<dbReference type="HAMAP" id="MF_00791">
    <property type="entry name" value="ApaG"/>
    <property type="match status" value="1"/>
</dbReference>
<dbReference type="InterPro" id="IPR007474">
    <property type="entry name" value="ApaG_domain"/>
</dbReference>
<dbReference type="InterPro" id="IPR036767">
    <property type="entry name" value="ApaG_sf"/>
</dbReference>
<dbReference type="InterPro" id="IPR023065">
    <property type="entry name" value="Uncharacterised_ApaG"/>
</dbReference>
<dbReference type="NCBIfam" id="NF003967">
    <property type="entry name" value="PRK05461.1"/>
    <property type="match status" value="1"/>
</dbReference>
<dbReference type="PANTHER" id="PTHR14289">
    <property type="entry name" value="F-BOX ONLY PROTEIN 3"/>
    <property type="match status" value="1"/>
</dbReference>
<dbReference type="PANTHER" id="PTHR14289:SF16">
    <property type="entry name" value="POLYMERASE DELTA-INTERACTING PROTEIN 2"/>
    <property type="match status" value="1"/>
</dbReference>
<dbReference type="Pfam" id="PF04379">
    <property type="entry name" value="DUF525"/>
    <property type="match status" value="1"/>
</dbReference>
<dbReference type="SUPFAM" id="SSF110069">
    <property type="entry name" value="ApaG-like"/>
    <property type="match status" value="1"/>
</dbReference>
<dbReference type="PROSITE" id="PS51087">
    <property type="entry name" value="APAG"/>
    <property type="match status" value="1"/>
</dbReference>
<gene>
    <name evidence="1" type="primary">apaG</name>
    <name type="ordered locus">XAC0862</name>
</gene>
<organism>
    <name type="scientific">Xanthomonas axonopodis pv. citri (strain 306)</name>
    <dbReference type="NCBI Taxonomy" id="190486"/>
    <lineage>
        <taxon>Bacteria</taxon>
        <taxon>Pseudomonadati</taxon>
        <taxon>Pseudomonadota</taxon>
        <taxon>Gammaproteobacteria</taxon>
        <taxon>Lysobacterales</taxon>
        <taxon>Lysobacteraceae</taxon>
        <taxon>Xanthomonas</taxon>
    </lineage>
</organism>
<name>APAG_XANAC</name>
<feature type="chain" id="PRO_0000197970" description="Protein ApaG">
    <location>
        <begin position="1"/>
        <end position="127"/>
    </location>
</feature>
<feature type="domain" description="ApaG" evidence="1">
    <location>
        <begin position="3"/>
        <end position="127"/>
    </location>
</feature>
<feature type="strand" evidence="2">
    <location>
        <begin position="9"/>
        <end position="17"/>
    </location>
</feature>
<feature type="helix" evidence="2">
    <location>
        <begin position="24"/>
        <end position="26"/>
    </location>
</feature>
<feature type="strand" evidence="2">
    <location>
        <begin position="28"/>
        <end position="39"/>
    </location>
</feature>
<feature type="strand" evidence="2">
    <location>
        <begin position="41"/>
        <end position="43"/>
    </location>
</feature>
<feature type="strand" evidence="2">
    <location>
        <begin position="45"/>
        <end position="56"/>
    </location>
</feature>
<feature type="strand" evidence="2">
    <location>
        <begin position="61"/>
        <end position="69"/>
    </location>
</feature>
<feature type="strand" evidence="2">
    <location>
        <begin position="81"/>
        <end position="93"/>
    </location>
</feature>
<feature type="strand" evidence="2">
    <location>
        <begin position="95"/>
        <end position="105"/>
    </location>
</feature>
<feature type="strand" evidence="2">
    <location>
        <begin position="110"/>
        <end position="120"/>
    </location>
</feature>
<keyword id="KW-0002">3D-structure</keyword>
<sequence length="127" mass="14182">MQDDPRYRVEVEVSPRFLAHQSTPDEGRYAFAYSIRIQNAGAVPARLVARHWQITDGNGRTEQVDGEGVVGEQPWLRPGEAFHYTSGVLLETEQGQMQGHYDMVADDGTEFIAPIAAFVLSVPRTLH</sequence>
<proteinExistence type="evidence at protein level"/>
<evidence type="ECO:0000255" key="1">
    <source>
        <dbReference type="HAMAP-Rule" id="MF_00791"/>
    </source>
</evidence>
<evidence type="ECO:0007829" key="2">
    <source>
        <dbReference type="PDB" id="2F1E"/>
    </source>
</evidence>
<reference key="1">
    <citation type="journal article" date="2002" name="Nature">
        <title>Comparison of the genomes of two Xanthomonas pathogens with differing host specificities.</title>
        <authorList>
            <person name="da Silva A.C.R."/>
            <person name="Ferro J.A."/>
            <person name="Reinach F.C."/>
            <person name="Farah C.S."/>
            <person name="Furlan L.R."/>
            <person name="Quaggio R.B."/>
            <person name="Monteiro-Vitorello C.B."/>
            <person name="Van Sluys M.A."/>
            <person name="Almeida N.F. Jr."/>
            <person name="Alves L.M.C."/>
            <person name="do Amaral A.M."/>
            <person name="Bertolini M.C."/>
            <person name="Camargo L.E.A."/>
            <person name="Camarotte G."/>
            <person name="Cannavan F."/>
            <person name="Cardozo J."/>
            <person name="Chambergo F."/>
            <person name="Ciapina L.P."/>
            <person name="Cicarelli R.M.B."/>
            <person name="Coutinho L.L."/>
            <person name="Cursino-Santos J.R."/>
            <person name="El-Dorry H."/>
            <person name="Faria J.B."/>
            <person name="Ferreira A.J.S."/>
            <person name="Ferreira R.C.C."/>
            <person name="Ferro M.I.T."/>
            <person name="Formighieri E.F."/>
            <person name="Franco M.C."/>
            <person name="Greggio C.C."/>
            <person name="Gruber A."/>
            <person name="Katsuyama A.M."/>
            <person name="Kishi L.T."/>
            <person name="Leite R.P."/>
            <person name="Lemos E.G.M."/>
            <person name="Lemos M.V.F."/>
            <person name="Locali E.C."/>
            <person name="Machado M.A."/>
            <person name="Madeira A.M.B.N."/>
            <person name="Martinez-Rossi N.M."/>
            <person name="Martins E.C."/>
            <person name="Meidanis J."/>
            <person name="Menck C.F.M."/>
            <person name="Miyaki C.Y."/>
            <person name="Moon D.H."/>
            <person name="Moreira L.M."/>
            <person name="Novo M.T.M."/>
            <person name="Okura V.K."/>
            <person name="Oliveira M.C."/>
            <person name="Oliveira V.R."/>
            <person name="Pereira H.A."/>
            <person name="Rossi A."/>
            <person name="Sena J.A.D."/>
            <person name="Silva C."/>
            <person name="de Souza R.F."/>
            <person name="Spinola L.A.F."/>
            <person name="Takita M.A."/>
            <person name="Tamura R.E."/>
            <person name="Teixeira E.C."/>
            <person name="Tezza R.I.D."/>
            <person name="Trindade dos Santos M."/>
            <person name="Truffi D."/>
            <person name="Tsai S.M."/>
            <person name="White F.F."/>
            <person name="Setubal J.C."/>
            <person name="Kitajima J.P."/>
        </authorList>
    </citation>
    <scope>NUCLEOTIDE SEQUENCE [LARGE SCALE GENOMIC DNA]</scope>
    <source>
        <strain>306</strain>
    </source>
</reference>
<reference key="2">
    <citation type="journal article" date="2004" name="J. Biomol. NMR">
        <title>1H, (15)N and (13)C resonance assignments of the ApaG protein of the phytopathogen Xanthomonas axonopodis pv. citri.</title>
        <authorList>
            <person name="Katsuyama A.M."/>
            <person name="Cicero D.O."/>
            <person name="Spisni A."/>
            <person name="Paci M."/>
            <person name="Farah C.S."/>
            <person name="Pertinhez T.A."/>
        </authorList>
    </citation>
    <scope>STRUCTURE BY NMR</scope>
</reference>
<accession>Q8PP26</accession>